<protein>
    <recommendedName>
        <fullName evidence="5">Developmental regulatory protein wetA</fullName>
    </recommendedName>
</protein>
<sequence length="639" mass="66959">MALWTSSYPVDTGDRDPSFAWPDTDVPSAGLDESQHDLFAQFLDFEAGHGSTSSATVAVAEPFYMDPSHHHHHPHHHAHGESSTTSSGVSNADEFDFLSSSSNPGAAGYDVDPSTLAMFAQDPAAMYSTTSGVTVSDTELERLEGISLHSPKKGDGTFADRAASPTPVAAPAIAVNATTNAANTTTNARRSKKIVDALSSTFRKATTMRKTRKVSQTLQRAVSPSMENPPMAIKPGSAQSAAPVPRGRRAHRAHTQHALQHQQQQHQHQQQQAHQISESPPILQINTGLANSGGFVAGQFEDPFGGEISPTHAPQPQSQPPQMRYYSQGGLGTPLDSPTRSAAMLQQQWQQQQQQQHNGAQQHQWSAASSQQELWWGGAAGGGAIEAKNIDANMAMHSQHGELPYDVHADAGRVAPNGLLIHMPQPRPGSSSVHDLSLNAHTYLPPPPPVPTENTRSARPPRAPSSGARHHHRTTSSSPMRKQRGTSVSPSPGGNGSGGGTRQSRHSSGGSAASSSQRSASGRVSVPGTPSSSGIKKRRSRDAGSGSFSADEAGGFTLVGGGGGGGGGGGGGGIGFVNFTPNDGGVLMTGVAPSGSSKTKARREKEAQERRRRLSEAAMKAVAAAGGDIRKLREQGFEL</sequence>
<evidence type="ECO:0000250" key="1">
    <source>
        <dbReference type="UniProtKB" id="P22022"/>
    </source>
</evidence>
<evidence type="ECO:0000256" key="2">
    <source>
        <dbReference type="SAM" id="MobiDB-lite"/>
    </source>
</evidence>
<evidence type="ECO:0000269" key="3">
    <source>
    </source>
</evidence>
<evidence type="ECO:0000303" key="4">
    <source>
    </source>
</evidence>
<evidence type="ECO:0000305" key="5"/>
<dbReference type="EMBL" id="JH725166">
    <property type="protein sequence ID" value="EJP64951.1"/>
    <property type="molecule type" value="Genomic_DNA"/>
</dbReference>
<dbReference type="RefSeq" id="XP_008599445.1">
    <property type="nucleotide sequence ID" value="XM_008601223.1"/>
</dbReference>
<dbReference type="SMR" id="J5JPY5"/>
<dbReference type="STRING" id="655819.J5JPY5"/>
<dbReference type="GeneID" id="19889138"/>
<dbReference type="HOGENOM" id="CLU_020420_0_0_1"/>
<dbReference type="InParanoid" id="J5JPY5"/>
<dbReference type="OrthoDB" id="11486at474943"/>
<dbReference type="PHI-base" id="PHI:5054"/>
<dbReference type="Proteomes" id="UP000002762">
    <property type="component" value="Unassembled WGS sequence"/>
</dbReference>
<dbReference type="GO" id="GO:0048315">
    <property type="term" value="P:conidium formation"/>
    <property type="evidence" value="ECO:0007669"/>
    <property type="project" value="UniProtKB-KW"/>
</dbReference>
<dbReference type="GO" id="GO:0030435">
    <property type="term" value="P:sporulation resulting in formation of a cellular spore"/>
    <property type="evidence" value="ECO:0007669"/>
    <property type="project" value="UniProtKB-KW"/>
</dbReference>
<dbReference type="InterPro" id="IPR040112">
    <property type="entry name" value="WetA"/>
</dbReference>
<dbReference type="PANTHER" id="PTHR22934:SF25">
    <property type="entry name" value="DEVELOPMENTAL REGULATORY PROTEIN WETA"/>
    <property type="match status" value="1"/>
</dbReference>
<dbReference type="PANTHER" id="PTHR22934">
    <property type="entry name" value="PROTEIN ESC1/WETA-RELATED"/>
    <property type="match status" value="1"/>
</dbReference>
<feature type="chain" id="PRO_0000435931" description="Developmental regulatory protein wetA">
    <location>
        <begin position="1"/>
        <end position="639"/>
    </location>
</feature>
<feature type="region of interest" description="Disordered" evidence="2">
    <location>
        <begin position="65"/>
        <end position="97"/>
    </location>
</feature>
<feature type="region of interest" description="Disordered" evidence="2">
    <location>
        <begin position="206"/>
        <end position="369"/>
    </location>
</feature>
<feature type="region of interest" description="Disordered" evidence="2">
    <location>
        <begin position="418"/>
        <end position="552"/>
    </location>
</feature>
<feature type="region of interest" description="Disordered" evidence="2">
    <location>
        <begin position="587"/>
        <end position="613"/>
    </location>
</feature>
<feature type="compositionally biased region" description="Basic residues" evidence="2">
    <location>
        <begin position="69"/>
        <end position="78"/>
    </location>
</feature>
<feature type="compositionally biased region" description="Polar residues" evidence="2">
    <location>
        <begin position="81"/>
        <end position="90"/>
    </location>
</feature>
<feature type="compositionally biased region" description="Polar residues" evidence="2">
    <location>
        <begin position="214"/>
        <end position="226"/>
    </location>
</feature>
<feature type="compositionally biased region" description="Basic residues" evidence="2">
    <location>
        <begin position="246"/>
        <end position="255"/>
    </location>
</feature>
<feature type="compositionally biased region" description="Low complexity" evidence="2">
    <location>
        <begin position="256"/>
        <end position="275"/>
    </location>
</feature>
<feature type="compositionally biased region" description="Low complexity" evidence="2">
    <location>
        <begin position="346"/>
        <end position="369"/>
    </location>
</feature>
<feature type="compositionally biased region" description="Low complexity" evidence="2">
    <location>
        <begin position="506"/>
        <end position="526"/>
    </location>
</feature>
<accession>J5JPY5</accession>
<proteinExistence type="evidence at transcript level"/>
<gene>
    <name evidence="4" type="primary">wetA</name>
    <name type="ORF">BBA_06126</name>
</gene>
<name>WETA_BEAB2</name>
<keyword id="KW-0010">Activator</keyword>
<keyword id="KW-0183">Conidiation</keyword>
<keyword id="KW-1185">Reference proteome</keyword>
<keyword id="KW-0749">Sporulation</keyword>
<keyword id="KW-0804">Transcription</keyword>
<keyword id="KW-0805">Transcription regulation</keyword>
<keyword id="KW-0843">Virulence</keyword>
<comment type="function">
    <text evidence="1 3">BrlA, abaA and wetA are pivotal regulators of conidiophore development and conidium maturation (By similarity). They act individually and together to regulate their own expression and that of numerous other sporulation-specific genes (By similarity). Acts as a crucial regulator of both conidiation capacity and conidial quality (PubMed:26243054). Plays a role in virulence (PubMed:26243054).</text>
</comment>
<comment type="disruption phenotype">
    <text evidence="3">Leads to slower germination, lower hydrophobivity and lower virulence of conidia (PubMed:26243054).</text>
</comment>
<comment type="similarity">
    <text evidence="5">Belongs to the wetA family.</text>
</comment>
<organism>
    <name type="scientific">Beauveria bassiana (strain ARSEF 2860)</name>
    <name type="common">White muscardine disease fungus</name>
    <name type="synonym">Tritirachium shiotae</name>
    <dbReference type="NCBI Taxonomy" id="655819"/>
    <lineage>
        <taxon>Eukaryota</taxon>
        <taxon>Fungi</taxon>
        <taxon>Dikarya</taxon>
        <taxon>Ascomycota</taxon>
        <taxon>Pezizomycotina</taxon>
        <taxon>Sordariomycetes</taxon>
        <taxon>Hypocreomycetidae</taxon>
        <taxon>Hypocreales</taxon>
        <taxon>Cordycipitaceae</taxon>
        <taxon>Beauveria</taxon>
    </lineage>
</organism>
<reference key="1">
    <citation type="journal article" date="2012" name="Sci. Rep.">
        <title>Genomic perspectives on the evolution of fungal entomopathogenicity in Beauveria bassiana.</title>
        <authorList>
            <person name="Xiao G."/>
            <person name="Ying S.-H."/>
            <person name="Zheng P."/>
            <person name="Wang Z.-L."/>
            <person name="Zhang S."/>
            <person name="Xie X.-Q."/>
            <person name="Shang Y."/>
            <person name="St Leger R.J."/>
            <person name="Zhao G.-P."/>
            <person name="Wang C."/>
            <person name="Feng M.-G."/>
        </authorList>
    </citation>
    <scope>NUCLEOTIDE SEQUENCE [LARGE SCALE GENOMIC DNA]</scope>
    <source>
        <strain>ARSEF 2860</strain>
    </source>
</reference>
<reference key="2">
    <citation type="journal article" date="2015" name="Appl. Microbiol. Biotechnol.">
        <title>WetA and VosA are distinct regulators of conidiation capacity, conidial quality, and biological control potential of a fungal insect pathogen.</title>
        <authorList>
            <person name="Li F."/>
            <person name="Shi H.Q."/>
            <person name="Ying S.H."/>
            <person name="Feng M.G."/>
        </authorList>
    </citation>
    <scope>FUNCTION</scope>
    <scope>DISRUPTION PHENOTYPE</scope>
    <scope>INDUCTION</scope>
</reference>